<gene>
    <name evidence="1" type="primary">aroK</name>
    <name type="ordered locus">SNSL254_A3759</name>
</gene>
<keyword id="KW-0028">Amino-acid biosynthesis</keyword>
<keyword id="KW-0057">Aromatic amino acid biosynthesis</keyword>
<keyword id="KW-0067">ATP-binding</keyword>
<keyword id="KW-0963">Cytoplasm</keyword>
<keyword id="KW-0418">Kinase</keyword>
<keyword id="KW-0460">Magnesium</keyword>
<keyword id="KW-0479">Metal-binding</keyword>
<keyword id="KW-0547">Nucleotide-binding</keyword>
<keyword id="KW-0808">Transferase</keyword>
<dbReference type="EC" id="2.7.1.71" evidence="1"/>
<dbReference type="EMBL" id="CP001113">
    <property type="protein sequence ID" value="ACF61963.1"/>
    <property type="molecule type" value="Genomic_DNA"/>
</dbReference>
<dbReference type="RefSeq" id="WP_000818621.1">
    <property type="nucleotide sequence ID" value="NZ_CCMR01000004.1"/>
</dbReference>
<dbReference type="SMR" id="B4SVI9"/>
<dbReference type="GeneID" id="66757820"/>
<dbReference type="KEGG" id="see:SNSL254_A3759"/>
<dbReference type="HOGENOM" id="CLU_057607_2_2_6"/>
<dbReference type="UniPathway" id="UPA00053">
    <property type="reaction ID" value="UER00088"/>
</dbReference>
<dbReference type="Proteomes" id="UP000008824">
    <property type="component" value="Chromosome"/>
</dbReference>
<dbReference type="GO" id="GO:0005829">
    <property type="term" value="C:cytosol"/>
    <property type="evidence" value="ECO:0007669"/>
    <property type="project" value="TreeGrafter"/>
</dbReference>
<dbReference type="GO" id="GO:0005524">
    <property type="term" value="F:ATP binding"/>
    <property type="evidence" value="ECO:0007669"/>
    <property type="project" value="UniProtKB-UniRule"/>
</dbReference>
<dbReference type="GO" id="GO:0000287">
    <property type="term" value="F:magnesium ion binding"/>
    <property type="evidence" value="ECO:0007669"/>
    <property type="project" value="UniProtKB-UniRule"/>
</dbReference>
<dbReference type="GO" id="GO:0004765">
    <property type="term" value="F:shikimate kinase activity"/>
    <property type="evidence" value="ECO:0007669"/>
    <property type="project" value="UniProtKB-UniRule"/>
</dbReference>
<dbReference type="GO" id="GO:0008652">
    <property type="term" value="P:amino acid biosynthetic process"/>
    <property type="evidence" value="ECO:0007669"/>
    <property type="project" value="UniProtKB-KW"/>
</dbReference>
<dbReference type="GO" id="GO:0009073">
    <property type="term" value="P:aromatic amino acid family biosynthetic process"/>
    <property type="evidence" value="ECO:0007669"/>
    <property type="project" value="UniProtKB-KW"/>
</dbReference>
<dbReference type="GO" id="GO:0009423">
    <property type="term" value="P:chorismate biosynthetic process"/>
    <property type="evidence" value="ECO:0007669"/>
    <property type="project" value="UniProtKB-UniRule"/>
</dbReference>
<dbReference type="CDD" id="cd00464">
    <property type="entry name" value="SK"/>
    <property type="match status" value="1"/>
</dbReference>
<dbReference type="FunFam" id="3.40.50.300:FF:000099">
    <property type="entry name" value="Shikimate kinase 1"/>
    <property type="match status" value="1"/>
</dbReference>
<dbReference type="Gene3D" id="3.40.50.300">
    <property type="entry name" value="P-loop containing nucleotide triphosphate hydrolases"/>
    <property type="match status" value="1"/>
</dbReference>
<dbReference type="HAMAP" id="MF_00109">
    <property type="entry name" value="Shikimate_kinase"/>
    <property type="match status" value="1"/>
</dbReference>
<dbReference type="InterPro" id="IPR027417">
    <property type="entry name" value="P-loop_NTPase"/>
</dbReference>
<dbReference type="InterPro" id="IPR031322">
    <property type="entry name" value="Shikimate/glucono_kinase"/>
</dbReference>
<dbReference type="InterPro" id="IPR000623">
    <property type="entry name" value="Shikimate_kinase/TSH1"/>
</dbReference>
<dbReference type="InterPro" id="IPR023000">
    <property type="entry name" value="Shikimate_kinase_CS"/>
</dbReference>
<dbReference type="NCBIfam" id="NF003456">
    <property type="entry name" value="PRK05057.1"/>
    <property type="match status" value="1"/>
</dbReference>
<dbReference type="PANTHER" id="PTHR21087">
    <property type="entry name" value="SHIKIMATE KINASE"/>
    <property type="match status" value="1"/>
</dbReference>
<dbReference type="PANTHER" id="PTHR21087:SF16">
    <property type="entry name" value="SHIKIMATE KINASE 1, CHLOROPLASTIC"/>
    <property type="match status" value="1"/>
</dbReference>
<dbReference type="Pfam" id="PF01202">
    <property type="entry name" value="SKI"/>
    <property type="match status" value="1"/>
</dbReference>
<dbReference type="PRINTS" id="PR01100">
    <property type="entry name" value="SHIKIMTKNASE"/>
</dbReference>
<dbReference type="SUPFAM" id="SSF52540">
    <property type="entry name" value="P-loop containing nucleoside triphosphate hydrolases"/>
    <property type="match status" value="1"/>
</dbReference>
<dbReference type="PROSITE" id="PS01128">
    <property type="entry name" value="SHIKIMATE_KINASE"/>
    <property type="match status" value="1"/>
</dbReference>
<protein>
    <recommendedName>
        <fullName evidence="1">Shikimate kinase 1</fullName>
        <shortName evidence="1">SK 1</shortName>
        <ecNumber evidence="1">2.7.1.71</ecNumber>
    </recommendedName>
</protein>
<reference key="1">
    <citation type="journal article" date="2011" name="J. Bacteriol.">
        <title>Comparative genomics of 28 Salmonella enterica isolates: evidence for CRISPR-mediated adaptive sublineage evolution.</title>
        <authorList>
            <person name="Fricke W.F."/>
            <person name="Mammel M.K."/>
            <person name="McDermott P.F."/>
            <person name="Tartera C."/>
            <person name="White D.G."/>
            <person name="Leclerc J.E."/>
            <person name="Ravel J."/>
            <person name="Cebula T.A."/>
        </authorList>
    </citation>
    <scope>NUCLEOTIDE SEQUENCE [LARGE SCALE GENOMIC DNA]</scope>
    <source>
        <strain>SL254</strain>
    </source>
</reference>
<organism>
    <name type="scientific">Salmonella newport (strain SL254)</name>
    <dbReference type="NCBI Taxonomy" id="423368"/>
    <lineage>
        <taxon>Bacteria</taxon>
        <taxon>Pseudomonadati</taxon>
        <taxon>Pseudomonadota</taxon>
        <taxon>Gammaproteobacteria</taxon>
        <taxon>Enterobacterales</taxon>
        <taxon>Enterobacteriaceae</taxon>
        <taxon>Salmonella</taxon>
    </lineage>
</organism>
<accession>B4SVI9</accession>
<feature type="chain" id="PRO_1000094409" description="Shikimate kinase 1">
    <location>
        <begin position="1"/>
        <end position="173"/>
    </location>
</feature>
<feature type="binding site" evidence="1">
    <location>
        <begin position="14"/>
        <end position="19"/>
    </location>
    <ligand>
        <name>ATP</name>
        <dbReference type="ChEBI" id="CHEBI:30616"/>
    </ligand>
</feature>
<feature type="binding site" evidence="1">
    <location>
        <position position="18"/>
    </location>
    <ligand>
        <name>Mg(2+)</name>
        <dbReference type="ChEBI" id="CHEBI:18420"/>
    </ligand>
</feature>
<feature type="binding site" evidence="1">
    <location>
        <position position="36"/>
    </location>
    <ligand>
        <name>substrate</name>
    </ligand>
</feature>
<feature type="binding site" evidence="1">
    <location>
        <position position="60"/>
    </location>
    <ligand>
        <name>substrate</name>
    </ligand>
</feature>
<feature type="binding site" evidence="1">
    <location>
        <position position="82"/>
    </location>
    <ligand>
        <name>substrate</name>
    </ligand>
</feature>
<feature type="binding site" evidence="1">
    <location>
        <position position="120"/>
    </location>
    <ligand>
        <name>ATP</name>
        <dbReference type="ChEBI" id="CHEBI:30616"/>
    </ligand>
</feature>
<feature type="binding site" evidence="1">
    <location>
        <position position="140"/>
    </location>
    <ligand>
        <name>substrate</name>
    </ligand>
</feature>
<feature type="binding site" evidence="1">
    <location>
        <position position="157"/>
    </location>
    <ligand>
        <name>ATP</name>
        <dbReference type="ChEBI" id="CHEBI:30616"/>
    </ligand>
</feature>
<proteinExistence type="inferred from homology"/>
<comment type="function">
    <text evidence="1">Catalyzes the specific phosphorylation of the 3-hydroxyl group of shikimic acid using ATP as a cosubstrate.</text>
</comment>
<comment type="catalytic activity">
    <reaction evidence="1">
        <text>shikimate + ATP = 3-phosphoshikimate + ADP + H(+)</text>
        <dbReference type="Rhea" id="RHEA:13121"/>
        <dbReference type="ChEBI" id="CHEBI:15378"/>
        <dbReference type="ChEBI" id="CHEBI:30616"/>
        <dbReference type="ChEBI" id="CHEBI:36208"/>
        <dbReference type="ChEBI" id="CHEBI:145989"/>
        <dbReference type="ChEBI" id="CHEBI:456216"/>
        <dbReference type="EC" id="2.7.1.71"/>
    </reaction>
</comment>
<comment type="cofactor">
    <cofactor evidence="1">
        <name>Mg(2+)</name>
        <dbReference type="ChEBI" id="CHEBI:18420"/>
    </cofactor>
    <text evidence="1">Binds 1 Mg(2+) ion per subunit.</text>
</comment>
<comment type="pathway">
    <text evidence="1">Metabolic intermediate biosynthesis; chorismate biosynthesis; chorismate from D-erythrose 4-phosphate and phosphoenolpyruvate: step 5/7.</text>
</comment>
<comment type="subunit">
    <text evidence="1">Monomer.</text>
</comment>
<comment type="subcellular location">
    <subcellularLocation>
        <location evidence="1">Cytoplasm</location>
    </subcellularLocation>
</comment>
<comment type="similarity">
    <text evidence="1">Belongs to the shikimate kinase family.</text>
</comment>
<evidence type="ECO:0000255" key="1">
    <source>
        <dbReference type="HAMAP-Rule" id="MF_00109"/>
    </source>
</evidence>
<name>AROK_SALNS</name>
<sequence length="173" mass="19470">MAEKRNIFLVGPMGAGKSTIGRQLAQQLNMEFYDSDQEIEKRTGADVGWVFDVEGEDGFRNREEKVINELTEKQGIVLATGGGSVKSRETRNRLSARGVVVYLETTIEKQLARTQRDKKRPLLQVEAPPREVLEALANERNPLYEEIADVTIRTDDQSAKVVANQIIHMLESN</sequence>